<name>VF123_ASFWA</name>
<proteinExistence type="inferred from homology"/>
<sequence>MPSTGTLVIIFAIVLILCIMLLFFYKAAEARNPGVLPPPIPPPTPPPPKKKYDHNEYMEKTDLEPEVKKNHRKWANEAEHLISSSVKGLENLDETAFLANHKGHGFRTFDHAKSLFKEFLKKY</sequence>
<protein>
    <recommendedName>
        <fullName>Uncharacterized protein CP123L</fullName>
        <shortName>pCP123L</shortName>
    </recommendedName>
</protein>
<organism>
    <name type="scientific">African swine fever virus (isolate Warthog/Namibia/Wart80/1980)</name>
    <name type="common">ASFV</name>
    <dbReference type="NCBI Taxonomy" id="561444"/>
    <lineage>
        <taxon>Viruses</taxon>
        <taxon>Varidnaviria</taxon>
        <taxon>Bamfordvirae</taxon>
        <taxon>Nucleocytoviricota</taxon>
        <taxon>Pokkesviricetes</taxon>
        <taxon>Asfuvirales</taxon>
        <taxon>Asfarviridae</taxon>
        <taxon>Asfivirus</taxon>
        <taxon>African swine fever virus</taxon>
    </lineage>
</organism>
<feature type="chain" id="PRO_0000373494" description="Uncharacterized protein CP123L">
    <location>
        <begin position="1"/>
        <end position="123"/>
    </location>
</feature>
<feature type="transmembrane region" description="Helical" evidence="2">
    <location>
        <begin position="5"/>
        <end position="25"/>
    </location>
</feature>
<feature type="region of interest" description="Disordered" evidence="3">
    <location>
        <begin position="33"/>
        <end position="54"/>
    </location>
</feature>
<feature type="compositionally biased region" description="Pro residues" evidence="3">
    <location>
        <begin position="35"/>
        <end position="47"/>
    </location>
</feature>
<dbReference type="EMBL" id="AY261366">
    <property type="status" value="NOT_ANNOTATED_CDS"/>
    <property type="molecule type" value="Genomic_DNA"/>
</dbReference>
<dbReference type="SMR" id="P0CA29"/>
<dbReference type="Proteomes" id="UP000000858">
    <property type="component" value="Segment"/>
</dbReference>
<dbReference type="GO" id="GO:0033644">
    <property type="term" value="C:host cell membrane"/>
    <property type="evidence" value="ECO:0007669"/>
    <property type="project" value="UniProtKB-SubCell"/>
</dbReference>
<dbReference type="GO" id="GO:0016020">
    <property type="term" value="C:membrane"/>
    <property type="evidence" value="ECO:0007669"/>
    <property type="project" value="UniProtKB-KW"/>
</dbReference>
<dbReference type="GO" id="GO:0044423">
    <property type="term" value="C:virion component"/>
    <property type="evidence" value="ECO:0007669"/>
    <property type="project" value="UniProtKB-KW"/>
</dbReference>
<organismHost>
    <name type="scientific">Ornithodoros</name>
    <name type="common">relapsing fever ticks</name>
    <dbReference type="NCBI Taxonomy" id="6937"/>
</organismHost>
<organismHost>
    <name type="scientific">Phacochoerus aethiopicus</name>
    <name type="common">Warthog</name>
    <dbReference type="NCBI Taxonomy" id="85517"/>
</organismHost>
<organismHost>
    <name type="scientific">Phacochoerus africanus</name>
    <name type="common">Warthog</name>
    <dbReference type="NCBI Taxonomy" id="41426"/>
</organismHost>
<organismHost>
    <name type="scientific">Potamochoerus larvatus</name>
    <name type="common">Bushpig</name>
    <dbReference type="NCBI Taxonomy" id="273792"/>
</organismHost>
<organismHost>
    <name type="scientific">Sus scrofa</name>
    <name type="common">Pig</name>
    <dbReference type="NCBI Taxonomy" id="9823"/>
</organismHost>
<gene>
    <name type="ordered locus">War-101</name>
</gene>
<keyword id="KW-1043">Host membrane</keyword>
<keyword id="KW-0426">Late protein</keyword>
<keyword id="KW-0472">Membrane</keyword>
<keyword id="KW-0812">Transmembrane</keyword>
<keyword id="KW-1133">Transmembrane helix</keyword>
<keyword id="KW-0946">Virion</keyword>
<comment type="subcellular location">
    <subcellularLocation>
        <location evidence="4">Host membrane</location>
        <topology evidence="4">Single-pass membrane protein</topology>
    </subcellularLocation>
    <subcellularLocation>
        <location evidence="1">Virion</location>
    </subcellularLocation>
</comment>
<comment type="induction">
    <text evidence="4">Expressed in the late phase of the viral replicative cycle.</text>
</comment>
<comment type="similarity">
    <text evidence="4">Belongs to the asfivirus CP123L family.</text>
</comment>
<accession>P0CA29</accession>
<reference key="1">
    <citation type="submission" date="2003-03" db="EMBL/GenBank/DDBJ databases">
        <title>African swine fever virus genomes.</title>
        <authorList>
            <person name="Kutish G.F."/>
            <person name="Rock D.L."/>
        </authorList>
    </citation>
    <scope>NUCLEOTIDE SEQUENCE [LARGE SCALE GENOMIC DNA]</scope>
</reference>
<evidence type="ECO:0000250" key="1">
    <source>
        <dbReference type="UniProtKB" id="Q65178"/>
    </source>
</evidence>
<evidence type="ECO:0000255" key="2"/>
<evidence type="ECO:0000256" key="3">
    <source>
        <dbReference type="SAM" id="MobiDB-lite"/>
    </source>
</evidence>
<evidence type="ECO:0000305" key="4"/>